<comment type="function">
    <text evidence="3">Odorant receptor.</text>
</comment>
<comment type="subcellular location">
    <subcellularLocation>
        <location>Cell membrane</location>
        <topology>Multi-pass membrane protein</topology>
    </subcellularLocation>
</comment>
<comment type="similarity">
    <text evidence="2">Belongs to the G-protein coupled receptor 1 family.</text>
</comment>
<dbReference type="EMBL" id="AF101730">
    <property type="protein sequence ID" value="AAF03315.1"/>
    <property type="molecule type" value="Genomic_DNA"/>
</dbReference>
<dbReference type="RefSeq" id="NP_001009879.1">
    <property type="nucleotide sequence ID" value="NM_001009879.1"/>
</dbReference>
<dbReference type="SMR" id="Q9TUA9"/>
<dbReference type="FunCoup" id="Q9TUA9">
    <property type="interactions" value="336"/>
</dbReference>
<dbReference type="STRING" id="9598.ENSPTRP00000014614"/>
<dbReference type="GlyCosmos" id="Q9TUA9">
    <property type="glycosylation" value="1 site, No reported glycans"/>
</dbReference>
<dbReference type="PaxDb" id="9598-ENSPTRP00000014614"/>
<dbReference type="Ensembl" id="ENSPTRT00000015796.2">
    <property type="protein sequence ID" value="ENSPTRP00000014614.1"/>
    <property type="gene ID" value="ENSPTRG00000050804.1"/>
</dbReference>
<dbReference type="GeneID" id="494121"/>
<dbReference type="KEGG" id="ptr:494121"/>
<dbReference type="CTD" id="8387"/>
<dbReference type="VGNC" id="VGNC:112724">
    <property type="gene designation" value="OR1E1"/>
</dbReference>
<dbReference type="eggNOG" id="ENOG502SI5J">
    <property type="taxonomic scope" value="Eukaryota"/>
</dbReference>
<dbReference type="GeneTree" id="ENSGT00940000165283"/>
<dbReference type="HOGENOM" id="CLU_012526_1_3_1"/>
<dbReference type="InParanoid" id="Q9TUA9"/>
<dbReference type="OMA" id="TVMSTMY"/>
<dbReference type="TreeFam" id="TF337210"/>
<dbReference type="Proteomes" id="UP000002277">
    <property type="component" value="Chromosome 17"/>
</dbReference>
<dbReference type="Bgee" id="ENSPTRG00000050804">
    <property type="expression patterns" value="Expressed in dorsolateral prefrontal cortex and 2 other cell types or tissues"/>
</dbReference>
<dbReference type="GO" id="GO:0005886">
    <property type="term" value="C:plasma membrane"/>
    <property type="evidence" value="ECO:0000318"/>
    <property type="project" value="GO_Central"/>
</dbReference>
<dbReference type="GO" id="GO:0004930">
    <property type="term" value="F:G protein-coupled receptor activity"/>
    <property type="evidence" value="ECO:0007669"/>
    <property type="project" value="UniProtKB-KW"/>
</dbReference>
<dbReference type="GO" id="GO:0004984">
    <property type="term" value="F:olfactory receptor activity"/>
    <property type="evidence" value="ECO:0000318"/>
    <property type="project" value="GO_Central"/>
</dbReference>
<dbReference type="GO" id="GO:0007165">
    <property type="term" value="P:signal transduction"/>
    <property type="evidence" value="ECO:0000318"/>
    <property type="project" value="GO_Central"/>
</dbReference>
<dbReference type="CDD" id="cd15236">
    <property type="entry name" value="7tmA_OR1E-like"/>
    <property type="match status" value="1"/>
</dbReference>
<dbReference type="FunFam" id="1.20.1070.10:FF:000009">
    <property type="entry name" value="Olfactory receptor"/>
    <property type="match status" value="1"/>
</dbReference>
<dbReference type="Gene3D" id="1.20.1070.10">
    <property type="entry name" value="Rhodopsin 7-helix transmembrane proteins"/>
    <property type="match status" value="1"/>
</dbReference>
<dbReference type="InterPro" id="IPR000276">
    <property type="entry name" value="GPCR_Rhodpsn"/>
</dbReference>
<dbReference type="InterPro" id="IPR017452">
    <property type="entry name" value="GPCR_Rhodpsn_7TM"/>
</dbReference>
<dbReference type="InterPro" id="IPR000725">
    <property type="entry name" value="Olfact_rcpt"/>
</dbReference>
<dbReference type="PANTHER" id="PTHR48001">
    <property type="entry name" value="OLFACTORY RECEPTOR"/>
    <property type="match status" value="1"/>
</dbReference>
<dbReference type="Pfam" id="PF13853">
    <property type="entry name" value="7tm_4"/>
    <property type="match status" value="1"/>
</dbReference>
<dbReference type="PRINTS" id="PR00237">
    <property type="entry name" value="GPCRRHODOPSN"/>
</dbReference>
<dbReference type="PRINTS" id="PR00245">
    <property type="entry name" value="OLFACTORYR"/>
</dbReference>
<dbReference type="SUPFAM" id="SSF81321">
    <property type="entry name" value="Family A G protein-coupled receptor-like"/>
    <property type="match status" value="1"/>
</dbReference>
<dbReference type="PROSITE" id="PS00237">
    <property type="entry name" value="G_PROTEIN_RECEP_F1_1"/>
    <property type="match status" value="1"/>
</dbReference>
<dbReference type="PROSITE" id="PS50262">
    <property type="entry name" value="G_PROTEIN_RECEP_F1_2"/>
    <property type="match status" value="1"/>
</dbReference>
<feature type="chain" id="PRO_0000150427" description="Olfactory receptor 1E1">
    <location>
        <begin position="1"/>
        <end position="314"/>
    </location>
</feature>
<feature type="topological domain" description="Extracellular" evidence="1">
    <location>
        <begin position="1"/>
        <end position="25"/>
    </location>
</feature>
<feature type="transmembrane region" description="Helical; Name=1" evidence="1">
    <location>
        <begin position="26"/>
        <end position="49"/>
    </location>
</feature>
<feature type="topological domain" description="Cytoplasmic" evidence="1">
    <location>
        <begin position="50"/>
        <end position="57"/>
    </location>
</feature>
<feature type="transmembrane region" description="Helical; Name=2" evidence="1">
    <location>
        <begin position="58"/>
        <end position="79"/>
    </location>
</feature>
<feature type="topological domain" description="Extracellular" evidence="1">
    <location>
        <begin position="80"/>
        <end position="100"/>
    </location>
</feature>
<feature type="transmembrane region" description="Helical; Name=3" evidence="1">
    <location>
        <begin position="101"/>
        <end position="120"/>
    </location>
</feature>
<feature type="topological domain" description="Cytoplasmic" evidence="1">
    <location>
        <begin position="121"/>
        <end position="139"/>
    </location>
</feature>
<feature type="transmembrane region" description="Helical; Name=4" evidence="1">
    <location>
        <begin position="140"/>
        <end position="158"/>
    </location>
</feature>
<feature type="topological domain" description="Extracellular" evidence="1">
    <location>
        <begin position="159"/>
        <end position="195"/>
    </location>
</feature>
<feature type="transmembrane region" description="Helical; Name=5" evidence="1">
    <location>
        <begin position="196"/>
        <end position="219"/>
    </location>
</feature>
<feature type="topological domain" description="Cytoplasmic" evidence="1">
    <location>
        <begin position="220"/>
        <end position="236"/>
    </location>
</feature>
<feature type="transmembrane region" description="Helical; Name=6" evidence="1">
    <location>
        <begin position="237"/>
        <end position="259"/>
    </location>
</feature>
<feature type="topological domain" description="Extracellular" evidence="1">
    <location>
        <begin position="260"/>
        <end position="272"/>
    </location>
</feature>
<feature type="transmembrane region" description="Helical; Name=7" evidence="1">
    <location>
        <begin position="273"/>
        <end position="292"/>
    </location>
</feature>
<feature type="topological domain" description="Cytoplasmic" evidence="1">
    <location>
        <begin position="293"/>
        <end position="314"/>
    </location>
</feature>
<feature type="glycosylation site" description="N-linked (GlcNAc...) asparagine" evidence="1">
    <location>
        <position position="5"/>
    </location>
</feature>
<feature type="disulfide bond" evidence="2">
    <location>
        <begin position="97"/>
        <end position="189"/>
    </location>
</feature>
<keyword id="KW-1003">Cell membrane</keyword>
<keyword id="KW-1015">Disulfide bond</keyword>
<keyword id="KW-0297">G-protein coupled receptor</keyword>
<keyword id="KW-0325">Glycoprotein</keyword>
<keyword id="KW-0472">Membrane</keyword>
<keyword id="KW-0552">Olfaction</keyword>
<keyword id="KW-0675">Receptor</keyword>
<keyword id="KW-1185">Reference proteome</keyword>
<keyword id="KW-0716">Sensory transduction</keyword>
<keyword id="KW-0807">Transducer</keyword>
<keyword id="KW-0812">Transmembrane</keyword>
<keyword id="KW-1133">Transmembrane helix</keyword>
<evidence type="ECO:0000255" key="1"/>
<evidence type="ECO:0000255" key="2">
    <source>
        <dbReference type="PROSITE-ProRule" id="PRU00521"/>
    </source>
</evidence>
<evidence type="ECO:0000305" key="3"/>
<proteinExistence type="inferred from homology"/>
<accession>Q9TUA9</accession>
<protein>
    <recommendedName>
        <fullName>Olfactory receptor 1E1</fullName>
    </recommendedName>
</protein>
<gene>
    <name type="primary">OR1E1</name>
</gene>
<sequence>MMGQNQTSISDFLLLGLPIQPEQQNLCYALFLAMYLTTLLGNLLIIVLIRLDSHLHTPMYLFLSNLSFSDLCFSSVTIPKLLQNMQNQDPSIPYADCLTQMYFFLLFGDLESFLLVAMAYDRYVAICFPLHYTAIMSPMLCLSVVALSWVLTTFHAMLHTLLMARLCFCADNVIPHFFCDMSALLKLACSDTRVNEWVIFIMGGLILVIPFLLILGSYARIVSSILKVPSSKGICKALSTCGSHLSVVSLFYGTVIGLYLCPSANSSTLKDTVMAMIYTVVTPMLNPFIYSLRNRDMKGALSRVIHQKKTFFSL</sequence>
<name>OR1E1_PANTR</name>
<reference key="1">
    <citation type="journal article" date="1999" name="Genomics">
        <title>Primate evolution of an olfactory receptor cluster: diversification by gene conversion and recent emergence of pseudogenes.</title>
        <authorList>
            <person name="Sharon D."/>
            <person name="Glusman G."/>
            <person name="Pilpel Y."/>
            <person name="Khen M."/>
            <person name="Gruetzner F."/>
            <person name="Haaf T."/>
            <person name="Lancet D."/>
        </authorList>
    </citation>
    <scope>NUCLEOTIDE SEQUENCE [GENOMIC DNA]</scope>
</reference>
<organism>
    <name type="scientific">Pan troglodytes</name>
    <name type="common">Chimpanzee</name>
    <dbReference type="NCBI Taxonomy" id="9598"/>
    <lineage>
        <taxon>Eukaryota</taxon>
        <taxon>Metazoa</taxon>
        <taxon>Chordata</taxon>
        <taxon>Craniata</taxon>
        <taxon>Vertebrata</taxon>
        <taxon>Euteleostomi</taxon>
        <taxon>Mammalia</taxon>
        <taxon>Eutheria</taxon>
        <taxon>Euarchontoglires</taxon>
        <taxon>Primates</taxon>
        <taxon>Haplorrhini</taxon>
        <taxon>Catarrhini</taxon>
        <taxon>Hominidae</taxon>
        <taxon>Pan</taxon>
    </lineage>
</organism>